<sequence>MLDFFTIFSKGGLVLWCFQGVSDSCTGPVNALIRSVLLQERGGNNSFTHEALTLKYKLDNQFELVFVVGFQKILTLTYVDKLIDDVHRLFRDKYRTEIQQQSALSLLNGTFDFQNDFLRLLREAEESSKIRAPTTMKKFEDSEKAKKPVRSMIETRGEKTKEKAKNNKKRGAKKEGSDGTLATSKTAPAEKSGLSAGPENGELSKEELIRRKREEFIQKHGKGLDKSSKSTKSDTPKEKGKKAPRVWELGGCANKEVLDYSTPTTNGTPEAALSEDINLIRGTGPGGQLQDLDCSSSDDEGATQNTKPSATKGTLGGMFGMLKGLVGSKSLSREDMESVLDKMRDHLIAKNVAADIAVQLCESVANKLEGKVMGTFSTVTSTVKQALQESLVQILQPQRRVDMLRDIMDAQRRQRPYVVTFCGVNGVGKSTNLAKISFWLLENGFSVLIAACDTFRAGAVEQLRTHTRRLTALHPPEKHGGRTMVQLFEKGYGKDAAGIAMEAIAFARNQGFDVVLVDTAGRMQDNAPLMTALAKLITVNTPDLVLFVGEALVGNEAVDQLVKFNRALADHSMAQTPRLIDGIVLTKFDTIDDKVGAAISMTYITSKPIVFVGTGQTYCDLRSLNAKAVVAALMKA</sequence>
<feature type="chain" id="PRO_0000101214" description="Signal recognition particle receptor subunit alpha">
    <location>
        <begin position="1"/>
        <end position="636"/>
    </location>
</feature>
<feature type="region of interest" description="Disordered" evidence="4">
    <location>
        <begin position="132"/>
        <end position="205"/>
    </location>
</feature>
<feature type="region of interest" description="Disordered" evidence="4">
    <location>
        <begin position="217"/>
        <end position="246"/>
    </location>
</feature>
<feature type="region of interest" description="Disordered" evidence="4">
    <location>
        <begin position="280"/>
        <end position="314"/>
    </location>
</feature>
<feature type="region of interest" description="NG domain" evidence="2">
    <location>
        <begin position="417"/>
        <end position="634"/>
    </location>
</feature>
<feature type="compositionally biased region" description="Basic and acidic residues" evidence="4">
    <location>
        <begin position="137"/>
        <end position="146"/>
    </location>
</feature>
<feature type="compositionally biased region" description="Basic and acidic residues" evidence="4">
    <location>
        <begin position="153"/>
        <end position="165"/>
    </location>
</feature>
<feature type="compositionally biased region" description="Basic and acidic residues" evidence="4">
    <location>
        <begin position="217"/>
        <end position="238"/>
    </location>
</feature>
<feature type="compositionally biased region" description="Polar residues" evidence="4">
    <location>
        <begin position="302"/>
        <end position="312"/>
    </location>
</feature>
<feature type="binding site" evidence="1">
    <location>
        <begin position="423"/>
        <end position="430"/>
    </location>
    <ligand>
        <name>GTP</name>
        <dbReference type="ChEBI" id="CHEBI:37565"/>
    </ligand>
</feature>
<feature type="binding site" evidence="1">
    <location>
        <begin position="518"/>
        <end position="522"/>
    </location>
    <ligand>
        <name>GTP</name>
        <dbReference type="ChEBI" id="CHEBI:37565"/>
    </ligand>
</feature>
<feature type="binding site" evidence="1">
    <location>
        <begin position="586"/>
        <end position="589"/>
    </location>
    <ligand>
        <name>GTP</name>
        <dbReference type="ChEBI" id="CHEBI:37565"/>
    </ligand>
</feature>
<feature type="modified residue" description="Phosphoserine" evidence="2">
    <location>
        <position position="177"/>
    </location>
</feature>
<feature type="modified residue" description="Phosphothreonine" evidence="2">
    <location>
        <position position="283"/>
    </location>
</feature>
<feature type="modified residue" description="Phosphoserine" evidence="6 7 8">
    <location>
        <position position="295"/>
    </location>
</feature>
<feature type="modified residue" description="Phosphoserine" evidence="6 7 8">
    <location>
        <position position="296"/>
    </location>
</feature>
<feature type="modified residue" description="Phosphoserine" evidence="6 7 8">
    <location>
        <position position="297"/>
    </location>
</feature>
<feature type="modified residue" description="Phosphothreonine" evidence="8">
    <location>
        <position position="303"/>
    </location>
</feature>
<feature type="modified residue" description="Phosphothreonine" evidence="2">
    <location>
        <position position="576"/>
    </location>
</feature>
<feature type="sequence conflict" description="In Ref. 2; AAH21839." evidence="5" ref="2">
    <original>L</original>
    <variation>S</variation>
    <location>
        <position position="104"/>
    </location>
</feature>
<evidence type="ECO:0000250" key="1"/>
<evidence type="ECO:0000250" key="2">
    <source>
        <dbReference type="UniProtKB" id="P08240"/>
    </source>
</evidence>
<evidence type="ECO:0000250" key="3">
    <source>
        <dbReference type="UniProtKB" id="P32916"/>
    </source>
</evidence>
<evidence type="ECO:0000256" key="4">
    <source>
        <dbReference type="SAM" id="MobiDB-lite"/>
    </source>
</evidence>
<evidence type="ECO:0000305" key="5"/>
<evidence type="ECO:0007744" key="6">
    <source>
    </source>
</evidence>
<evidence type="ECO:0007744" key="7">
    <source>
    </source>
</evidence>
<evidence type="ECO:0007744" key="8">
    <source>
    </source>
</evidence>
<organism>
    <name type="scientific">Mus musculus</name>
    <name type="common">Mouse</name>
    <dbReference type="NCBI Taxonomy" id="10090"/>
    <lineage>
        <taxon>Eukaryota</taxon>
        <taxon>Metazoa</taxon>
        <taxon>Chordata</taxon>
        <taxon>Craniata</taxon>
        <taxon>Vertebrata</taxon>
        <taxon>Euteleostomi</taxon>
        <taxon>Mammalia</taxon>
        <taxon>Eutheria</taxon>
        <taxon>Euarchontoglires</taxon>
        <taxon>Glires</taxon>
        <taxon>Rodentia</taxon>
        <taxon>Myomorpha</taxon>
        <taxon>Muroidea</taxon>
        <taxon>Muridae</taxon>
        <taxon>Murinae</taxon>
        <taxon>Mus</taxon>
        <taxon>Mus</taxon>
    </lineage>
</organism>
<name>SRPRA_MOUSE</name>
<keyword id="KW-0256">Endoplasmic reticulum</keyword>
<keyword id="KW-0342">GTP-binding</keyword>
<keyword id="KW-0472">Membrane</keyword>
<keyword id="KW-0547">Nucleotide-binding</keyword>
<keyword id="KW-0597">Phosphoprotein</keyword>
<keyword id="KW-0675">Receptor</keyword>
<keyword id="KW-1185">Reference proteome</keyword>
<gene>
    <name evidence="2" type="primary">Srpra</name>
    <name type="synonym">Srpr</name>
</gene>
<comment type="function">
    <text evidence="2">Component of the SRP (signal recognition particle) receptor (By similarity). Ensures, in conjunction with the signal recognition particle, the correct targeting of the nascent secretory proteins to the endoplasmic reticulum membrane system (By similarity). Forms a guanosine 5'-triphosphate (GTP)-dependent complex with the SRP subunit SRP54 (By similarity). SRP receptor compaction and GTPase rearrangement drive SRP-mediated cotranslational protein translocation into the ER (By similarity).</text>
</comment>
<comment type="subunit">
    <text evidence="2">Heterodimer with SRPRB (By similarity). Interacts with the signal recognition particle (SRP) complex subunit SRP54 (By similarity).</text>
</comment>
<comment type="subcellular location">
    <subcellularLocation>
        <location evidence="3">Endoplasmic reticulum membrane</location>
        <topology evidence="3">Peripheral membrane protein</topology>
        <orientation evidence="3">Cytoplasmic side</orientation>
    </subcellularLocation>
    <text evidence="3">Thought to be anchored in the membrane through an interaction with SR-beta, which contains a bona fide transmembrane domain.</text>
</comment>
<comment type="domain">
    <text evidence="2">The NG domain, also named G domain, is a special guanosine triphosphatase (GTPase) domain, which forms a guanosine 5'-triphosphate (GTP)-dependent complex with a homologous NG domain in the signal recognition particle (SRP) complex subunit SRP54 (By similarity). The two NG domains undergo cooperative rearrangements upon their assembly, which culminate in the reciprocal activation of the GTPase activity of one another (By similarity). GTPase induced rearrangement of SR drives SRP-mediated cotranslational protein translocation into the ER (By similarity).</text>
</comment>
<comment type="similarity">
    <text evidence="5">Belongs to the GTP-binding SRP family.</text>
</comment>
<comment type="sequence caution" evidence="5">
    <conflict type="erroneous initiation">
        <sequence resource="EMBL-CDS" id="AAH12512"/>
    </conflict>
</comment>
<reference key="1">
    <citation type="journal article" date="2005" name="Science">
        <title>The transcriptional landscape of the mammalian genome.</title>
        <authorList>
            <person name="Carninci P."/>
            <person name="Kasukawa T."/>
            <person name="Katayama S."/>
            <person name="Gough J."/>
            <person name="Frith M.C."/>
            <person name="Maeda N."/>
            <person name="Oyama R."/>
            <person name="Ravasi T."/>
            <person name="Lenhard B."/>
            <person name="Wells C."/>
            <person name="Kodzius R."/>
            <person name="Shimokawa K."/>
            <person name="Bajic V.B."/>
            <person name="Brenner S.E."/>
            <person name="Batalov S."/>
            <person name="Forrest A.R."/>
            <person name="Zavolan M."/>
            <person name="Davis M.J."/>
            <person name="Wilming L.G."/>
            <person name="Aidinis V."/>
            <person name="Allen J.E."/>
            <person name="Ambesi-Impiombato A."/>
            <person name="Apweiler R."/>
            <person name="Aturaliya R.N."/>
            <person name="Bailey T.L."/>
            <person name="Bansal M."/>
            <person name="Baxter L."/>
            <person name="Beisel K.W."/>
            <person name="Bersano T."/>
            <person name="Bono H."/>
            <person name="Chalk A.M."/>
            <person name="Chiu K.P."/>
            <person name="Choudhary V."/>
            <person name="Christoffels A."/>
            <person name="Clutterbuck D.R."/>
            <person name="Crowe M.L."/>
            <person name="Dalla E."/>
            <person name="Dalrymple B.P."/>
            <person name="de Bono B."/>
            <person name="Della Gatta G."/>
            <person name="di Bernardo D."/>
            <person name="Down T."/>
            <person name="Engstrom P."/>
            <person name="Fagiolini M."/>
            <person name="Faulkner G."/>
            <person name="Fletcher C.F."/>
            <person name="Fukushima T."/>
            <person name="Furuno M."/>
            <person name="Futaki S."/>
            <person name="Gariboldi M."/>
            <person name="Georgii-Hemming P."/>
            <person name="Gingeras T.R."/>
            <person name="Gojobori T."/>
            <person name="Green R.E."/>
            <person name="Gustincich S."/>
            <person name="Harbers M."/>
            <person name="Hayashi Y."/>
            <person name="Hensch T.K."/>
            <person name="Hirokawa N."/>
            <person name="Hill D."/>
            <person name="Huminiecki L."/>
            <person name="Iacono M."/>
            <person name="Ikeo K."/>
            <person name="Iwama A."/>
            <person name="Ishikawa T."/>
            <person name="Jakt M."/>
            <person name="Kanapin A."/>
            <person name="Katoh M."/>
            <person name="Kawasawa Y."/>
            <person name="Kelso J."/>
            <person name="Kitamura H."/>
            <person name="Kitano H."/>
            <person name="Kollias G."/>
            <person name="Krishnan S.P."/>
            <person name="Kruger A."/>
            <person name="Kummerfeld S.K."/>
            <person name="Kurochkin I.V."/>
            <person name="Lareau L.F."/>
            <person name="Lazarevic D."/>
            <person name="Lipovich L."/>
            <person name="Liu J."/>
            <person name="Liuni S."/>
            <person name="McWilliam S."/>
            <person name="Madan Babu M."/>
            <person name="Madera M."/>
            <person name="Marchionni L."/>
            <person name="Matsuda H."/>
            <person name="Matsuzawa S."/>
            <person name="Miki H."/>
            <person name="Mignone F."/>
            <person name="Miyake S."/>
            <person name="Morris K."/>
            <person name="Mottagui-Tabar S."/>
            <person name="Mulder N."/>
            <person name="Nakano N."/>
            <person name="Nakauchi H."/>
            <person name="Ng P."/>
            <person name="Nilsson R."/>
            <person name="Nishiguchi S."/>
            <person name="Nishikawa S."/>
            <person name="Nori F."/>
            <person name="Ohara O."/>
            <person name="Okazaki Y."/>
            <person name="Orlando V."/>
            <person name="Pang K.C."/>
            <person name="Pavan W.J."/>
            <person name="Pavesi G."/>
            <person name="Pesole G."/>
            <person name="Petrovsky N."/>
            <person name="Piazza S."/>
            <person name="Reed J."/>
            <person name="Reid J.F."/>
            <person name="Ring B.Z."/>
            <person name="Ringwald M."/>
            <person name="Rost B."/>
            <person name="Ruan Y."/>
            <person name="Salzberg S.L."/>
            <person name="Sandelin A."/>
            <person name="Schneider C."/>
            <person name="Schoenbach C."/>
            <person name="Sekiguchi K."/>
            <person name="Semple C.A."/>
            <person name="Seno S."/>
            <person name="Sessa L."/>
            <person name="Sheng Y."/>
            <person name="Shibata Y."/>
            <person name="Shimada H."/>
            <person name="Shimada K."/>
            <person name="Silva D."/>
            <person name="Sinclair B."/>
            <person name="Sperling S."/>
            <person name="Stupka E."/>
            <person name="Sugiura K."/>
            <person name="Sultana R."/>
            <person name="Takenaka Y."/>
            <person name="Taki K."/>
            <person name="Tammoja K."/>
            <person name="Tan S.L."/>
            <person name="Tang S."/>
            <person name="Taylor M.S."/>
            <person name="Tegner J."/>
            <person name="Teichmann S.A."/>
            <person name="Ueda H.R."/>
            <person name="van Nimwegen E."/>
            <person name="Verardo R."/>
            <person name="Wei C.L."/>
            <person name="Yagi K."/>
            <person name="Yamanishi H."/>
            <person name="Zabarovsky E."/>
            <person name="Zhu S."/>
            <person name="Zimmer A."/>
            <person name="Hide W."/>
            <person name="Bult C."/>
            <person name="Grimmond S.M."/>
            <person name="Teasdale R.D."/>
            <person name="Liu E.T."/>
            <person name="Brusic V."/>
            <person name="Quackenbush J."/>
            <person name="Wahlestedt C."/>
            <person name="Mattick J.S."/>
            <person name="Hume D.A."/>
            <person name="Kai C."/>
            <person name="Sasaki D."/>
            <person name="Tomaru Y."/>
            <person name="Fukuda S."/>
            <person name="Kanamori-Katayama M."/>
            <person name="Suzuki M."/>
            <person name="Aoki J."/>
            <person name="Arakawa T."/>
            <person name="Iida J."/>
            <person name="Imamura K."/>
            <person name="Itoh M."/>
            <person name="Kato T."/>
            <person name="Kawaji H."/>
            <person name="Kawagashira N."/>
            <person name="Kawashima T."/>
            <person name="Kojima M."/>
            <person name="Kondo S."/>
            <person name="Konno H."/>
            <person name="Nakano K."/>
            <person name="Ninomiya N."/>
            <person name="Nishio T."/>
            <person name="Okada M."/>
            <person name="Plessy C."/>
            <person name="Shibata K."/>
            <person name="Shiraki T."/>
            <person name="Suzuki S."/>
            <person name="Tagami M."/>
            <person name="Waki K."/>
            <person name="Watahiki A."/>
            <person name="Okamura-Oho Y."/>
            <person name="Suzuki H."/>
            <person name="Kawai J."/>
            <person name="Hayashizaki Y."/>
        </authorList>
    </citation>
    <scope>NUCLEOTIDE SEQUENCE [LARGE SCALE MRNA]</scope>
    <source>
        <strain>C57BL/6J</strain>
        <tissue>Liver</tissue>
        <tissue>Thymus</tissue>
    </source>
</reference>
<reference key="2">
    <citation type="journal article" date="2004" name="Genome Res.">
        <title>The status, quality, and expansion of the NIH full-length cDNA project: the Mammalian Gene Collection (MGC).</title>
        <authorList>
            <consortium name="The MGC Project Team"/>
        </authorList>
    </citation>
    <scope>NUCLEOTIDE SEQUENCE [LARGE SCALE MRNA]</scope>
    <source>
        <tissue>Colon</tissue>
    </source>
</reference>
<reference key="3">
    <citation type="journal article" date="2007" name="Proc. Natl. Acad. Sci. U.S.A.">
        <title>Large-scale phosphorylation analysis of mouse liver.</title>
        <authorList>
            <person name="Villen J."/>
            <person name="Beausoleil S.A."/>
            <person name="Gerber S.A."/>
            <person name="Gygi S.P."/>
        </authorList>
    </citation>
    <scope>IDENTIFICATION BY MASS SPECTROMETRY [LARGE SCALE ANALYSIS]</scope>
    <source>
        <tissue>Liver</tissue>
    </source>
</reference>
<reference key="4">
    <citation type="journal article" date="2008" name="J. Proteome Res.">
        <title>Specific phosphopeptide enrichment with immobilized titanium ion affinity chromatography adsorbent for phosphoproteome analysis.</title>
        <authorList>
            <person name="Zhou H."/>
            <person name="Ye M."/>
            <person name="Dong J."/>
            <person name="Han G."/>
            <person name="Jiang X."/>
            <person name="Wu R."/>
            <person name="Zou H."/>
        </authorList>
    </citation>
    <scope>PHOSPHORYLATION [LARGE SCALE ANALYSIS] AT SER-295; SER-296 AND SER-297</scope>
    <scope>IDENTIFICATION BY MASS SPECTROMETRY [LARGE SCALE ANALYSIS]</scope>
    <source>
        <tissue>Liver</tissue>
    </source>
</reference>
<reference key="5">
    <citation type="journal article" date="2009" name="Immunity">
        <title>The phagosomal proteome in interferon-gamma-activated macrophages.</title>
        <authorList>
            <person name="Trost M."/>
            <person name="English L."/>
            <person name="Lemieux S."/>
            <person name="Courcelles M."/>
            <person name="Desjardins M."/>
            <person name="Thibault P."/>
        </authorList>
    </citation>
    <scope>PHOSPHORYLATION [LARGE SCALE ANALYSIS] AT SER-295; SER-296 AND SER-297</scope>
    <scope>IDENTIFICATION BY MASS SPECTROMETRY [LARGE SCALE ANALYSIS]</scope>
</reference>
<reference key="6">
    <citation type="journal article" date="2010" name="Cell">
        <title>A tissue-specific atlas of mouse protein phosphorylation and expression.</title>
        <authorList>
            <person name="Huttlin E.L."/>
            <person name="Jedrychowski M.P."/>
            <person name="Elias J.E."/>
            <person name="Goswami T."/>
            <person name="Rad R."/>
            <person name="Beausoleil S.A."/>
            <person name="Villen J."/>
            <person name="Haas W."/>
            <person name="Sowa M.E."/>
            <person name="Gygi S.P."/>
        </authorList>
    </citation>
    <scope>PHOSPHORYLATION [LARGE SCALE ANALYSIS] AT SER-295; SER-296; SER-297 AND THR-303</scope>
    <scope>IDENTIFICATION BY MASS SPECTROMETRY [LARGE SCALE ANALYSIS]</scope>
    <source>
        <tissue>Brain</tissue>
        <tissue>Brown adipose tissue</tissue>
        <tissue>Heart</tissue>
        <tissue>Kidney</tissue>
        <tissue>Liver</tissue>
        <tissue>Lung</tissue>
        <tissue>Pancreas</tissue>
        <tissue>Spleen</tissue>
        <tissue>Testis</tissue>
    </source>
</reference>
<dbReference type="EMBL" id="AK004967">
    <property type="protein sequence ID" value="BAB23706.1"/>
    <property type="molecule type" value="mRNA"/>
</dbReference>
<dbReference type="EMBL" id="AK038017">
    <property type="protein sequence ID" value="BAC29922.1"/>
    <property type="molecule type" value="mRNA"/>
</dbReference>
<dbReference type="EMBL" id="BC012512">
    <property type="protein sequence ID" value="AAH12512.1"/>
    <property type="status" value="ALT_INIT"/>
    <property type="molecule type" value="mRNA"/>
</dbReference>
<dbReference type="EMBL" id="BC021839">
    <property type="protein sequence ID" value="AAH21839.1"/>
    <property type="molecule type" value="mRNA"/>
</dbReference>
<dbReference type="CCDS" id="CCDS22959.1"/>
<dbReference type="RefSeq" id="NP_080406.1">
    <property type="nucleotide sequence ID" value="NM_026130.1"/>
</dbReference>
<dbReference type="SMR" id="Q9DBG7"/>
<dbReference type="BioGRID" id="212161">
    <property type="interactions" value="11"/>
</dbReference>
<dbReference type="ComplexPortal" id="CPX-4622">
    <property type="entry name" value="Signal recognition particle receptor complex"/>
</dbReference>
<dbReference type="FunCoup" id="Q9DBG7">
    <property type="interactions" value="2346"/>
</dbReference>
<dbReference type="STRING" id="10090.ENSMUSP00000034541"/>
<dbReference type="GlyGen" id="Q9DBG7">
    <property type="glycosylation" value="2 sites, 2 N-linked glycans (2 sites)"/>
</dbReference>
<dbReference type="iPTMnet" id="Q9DBG7"/>
<dbReference type="PhosphoSitePlus" id="Q9DBG7"/>
<dbReference type="SwissPalm" id="Q9DBG7"/>
<dbReference type="jPOST" id="Q9DBG7"/>
<dbReference type="PaxDb" id="10090-ENSMUSP00000034541"/>
<dbReference type="PeptideAtlas" id="Q9DBG7"/>
<dbReference type="ProteomicsDB" id="254561"/>
<dbReference type="Pumba" id="Q9DBG7"/>
<dbReference type="Antibodypedia" id="32980">
    <property type="antibodies" value="157 antibodies from 22 providers"/>
</dbReference>
<dbReference type="DNASU" id="67398"/>
<dbReference type="Ensembl" id="ENSMUST00000034541.12">
    <property type="protein sequence ID" value="ENSMUSP00000034541.6"/>
    <property type="gene ID" value="ENSMUSG00000032042.12"/>
</dbReference>
<dbReference type="GeneID" id="67398"/>
<dbReference type="KEGG" id="mmu:67398"/>
<dbReference type="UCSC" id="uc009osy.1">
    <property type="organism name" value="mouse"/>
</dbReference>
<dbReference type="AGR" id="MGI:1914648"/>
<dbReference type="CTD" id="6734"/>
<dbReference type="MGI" id="MGI:1914648">
    <property type="gene designation" value="Srpra"/>
</dbReference>
<dbReference type="VEuPathDB" id="HostDB:ENSMUSG00000032042"/>
<dbReference type="eggNOG" id="KOG0781">
    <property type="taxonomic scope" value="Eukaryota"/>
</dbReference>
<dbReference type="GeneTree" id="ENSGT00550000074936"/>
<dbReference type="HOGENOM" id="CLU_009301_8_0_1"/>
<dbReference type="InParanoid" id="Q9DBG7"/>
<dbReference type="OMA" id="HLGWIDK"/>
<dbReference type="OrthoDB" id="1727884at2759"/>
<dbReference type="PhylomeDB" id="Q9DBG7"/>
<dbReference type="TreeFam" id="TF106189"/>
<dbReference type="BRENDA" id="3.6.5.4">
    <property type="organism ID" value="3474"/>
</dbReference>
<dbReference type="BioGRID-ORCS" id="67398">
    <property type="hits" value="21 hits in 78 CRISPR screens"/>
</dbReference>
<dbReference type="CD-CODE" id="CE726F99">
    <property type="entry name" value="Postsynaptic density"/>
</dbReference>
<dbReference type="ChiTaRS" id="Srpr">
    <property type="organism name" value="mouse"/>
</dbReference>
<dbReference type="PRO" id="PR:Q9DBG7"/>
<dbReference type="Proteomes" id="UP000000589">
    <property type="component" value="Chromosome 9"/>
</dbReference>
<dbReference type="RNAct" id="Q9DBG7">
    <property type="molecule type" value="protein"/>
</dbReference>
<dbReference type="Bgee" id="ENSMUSG00000032042">
    <property type="expression patterns" value="Expressed in prostate gland ventral lobe and 263 other cell types or tissues"/>
</dbReference>
<dbReference type="ExpressionAtlas" id="Q9DBG7">
    <property type="expression patterns" value="baseline and differential"/>
</dbReference>
<dbReference type="GO" id="GO:0016020">
    <property type="term" value="C:membrane"/>
    <property type="evidence" value="ECO:0000266"/>
    <property type="project" value="MGI"/>
</dbReference>
<dbReference type="GO" id="GO:0005785">
    <property type="term" value="C:signal recognition particle receptor complex"/>
    <property type="evidence" value="ECO:0000269"/>
    <property type="project" value="ComplexPortal"/>
</dbReference>
<dbReference type="GO" id="GO:0016887">
    <property type="term" value="F:ATP hydrolysis activity"/>
    <property type="evidence" value="ECO:0007669"/>
    <property type="project" value="InterPro"/>
</dbReference>
<dbReference type="GO" id="GO:0005525">
    <property type="term" value="F:GTP binding"/>
    <property type="evidence" value="ECO:0007669"/>
    <property type="project" value="UniProtKB-KW"/>
</dbReference>
<dbReference type="GO" id="GO:0003924">
    <property type="term" value="F:GTPase activity"/>
    <property type="evidence" value="ECO:0007669"/>
    <property type="project" value="InterPro"/>
</dbReference>
<dbReference type="GO" id="GO:0005047">
    <property type="term" value="F:signal recognition particle binding"/>
    <property type="evidence" value="ECO:0007669"/>
    <property type="project" value="InterPro"/>
</dbReference>
<dbReference type="GO" id="GO:0006886">
    <property type="term" value="P:intracellular protein transport"/>
    <property type="evidence" value="ECO:0007669"/>
    <property type="project" value="InterPro"/>
</dbReference>
<dbReference type="GO" id="GO:0006617">
    <property type="term" value="P:SRP-dependent cotranslational protein targeting to membrane, signal sequence recognition"/>
    <property type="evidence" value="ECO:0000303"/>
    <property type="project" value="ComplexPortal"/>
</dbReference>
<dbReference type="CDD" id="cd14826">
    <property type="entry name" value="SR_alpha_SRX"/>
    <property type="match status" value="1"/>
</dbReference>
<dbReference type="CDD" id="cd17876">
    <property type="entry name" value="SRalpha_C"/>
    <property type="match status" value="1"/>
</dbReference>
<dbReference type="FunFam" id="3.40.50.300:FF:000188">
    <property type="entry name" value="signal recognition particle receptor subunit alpha"/>
    <property type="match status" value="1"/>
</dbReference>
<dbReference type="FunFam" id="1.20.120.140:FF:000010">
    <property type="entry name" value="signal recognition particle receptor subunit alpha isoform X2"/>
    <property type="match status" value="1"/>
</dbReference>
<dbReference type="FunFam" id="3.30.450.60:FF:000021">
    <property type="entry name" value="signal recognition particle receptor subunit alpha isoform X2"/>
    <property type="match status" value="1"/>
</dbReference>
<dbReference type="Gene3D" id="3.30.450.60">
    <property type="match status" value="1"/>
</dbReference>
<dbReference type="Gene3D" id="3.40.50.300">
    <property type="entry name" value="P-loop containing nucleotide triphosphate hydrolases"/>
    <property type="match status" value="1"/>
</dbReference>
<dbReference type="Gene3D" id="1.20.120.140">
    <property type="entry name" value="Signal recognition particle SRP54, nucleotide-binding domain"/>
    <property type="match status" value="1"/>
</dbReference>
<dbReference type="InterPro" id="IPR003593">
    <property type="entry name" value="AAA+_ATPase"/>
</dbReference>
<dbReference type="InterPro" id="IPR011012">
    <property type="entry name" value="Longin-like_dom_sf"/>
</dbReference>
<dbReference type="InterPro" id="IPR027417">
    <property type="entry name" value="P-loop_NTPase"/>
</dbReference>
<dbReference type="InterPro" id="IPR007222">
    <property type="entry name" value="Sig_recog_particle_rcpt_asu_N"/>
</dbReference>
<dbReference type="InterPro" id="IPR013822">
    <property type="entry name" value="Signal_recog_particl_SRP54_hlx"/>
</dbReference>
<dbReference type="InterPro" id="IPR036225">
    <property type="entry name" value="SRP/SRP_N"/>
</dbReference>
<dbReference type="InterPro" id="IPR000897">
    <property type="entry name" value="SRP54_GTPase_dom"/>
</dbReference>
<dbReference type="InterPro" id="IPR042101">
    <property type="entry name" value="SRP54_N_sf"/>
</dbReference>
<dbReference type="PANTHER" id="PTHR43134">
    <property type="entry name" value="SIGNAL RECOGNITION PARTICLE RECEPTOR SUBUNIT ALPHA"/>
    <property type="match status" value="1"/>
</dbReference>
<dbReference type="PANTHER" id="PTHR43134:SF1">
    <property type="entry name" value="SIGNAL RECOGNITION PARTICLE RECEPTOR SUBUNIT ALPHA"/>
    <property type="match status" value="1"/>
</dbReference>
<dbReference type="Pfam" id="PF04086">
    <property type="entry name" value="SRP-alpha_N"/>
    <property type="match status" value="1"/>
</dbReference>
<dbReference type="Pfam" id="PF00448">
    <property type="entry name" value="SRP54"/>
    <property type="match status" value="1"/>
</dbReference>
<dbReference type="Pfam" id="PF02881">
    <property type="entry name" value="SRP54_N"/>
    <property type="match status" value="1"/>
</dbReference>
<dbReference type="SMART" id="SM00382">
    <property type="entry name" value="AAA"/>
    <property type="match status" value="1"/>
</dbReference>
<dbReference type="SMART" id="SM00962">
    <property type="entry name" value="SRP54"/>
    <property type="match status" value="1"/>
</dbReference>
<dbReference type="SMART" id="SM00963">
    <property type="entry name" value="SRP54_N"/>
    <property type="match status" value="1"/>
</dbReference>
<dbReference type="SUPFAM" id="SSF47364">
    <property type="entry name" value="Domain of the SRP/SRP receptor G-proteins"/>
    <property type="match status" value="1"/>
</dbReference>
<dbReference type="SUPFAM" id="SSF52540">
    <property type="entry name" value="P-loop containing nucleoside triphosphate hydrolases"/>
    <property type="match status" value="1"/>
</dbReference>
<dbReference type="SUPFAM" id="SSF64356">
    <property type="entry name" value="SNARE-like"/>
    <property type="match status" value="1"/>
</dbReference>
<dbReference type="PROSITE" id="PS00300">
    <property type="entry name" value="SRP54"/>
    <property type="match status" value="1"/>
</dbReference>
<protein>
    <recommendedName>
        <fullName>Signal recognition particle receptor subunit alpha</fullName>
        <shortName>SR-alpha</shortName>
    </recommendedName>
    <alternativeName>
        <fullName>Docking protein alpha</fullName>
        <shortName>DP-alpha</shortName>
    </alternativeName>
</protein>
<proteinExistence type="evidence at protein level"/>
<accession>Q9DBG7</accession>
<accession>Q8VC45</accession>
<accession>Q921H1</accession>